<gene>
    <name type="primary">PDR10</name>
    <name type="ordered locus">YOR328W</name>
</gene>
<organism>
    <name type="scientific">Saccharomyces cerevisiae (strain ATCC 204508 / S288c)</name>
    <name type="common">Baker's yeast</name>
    <dbReference type="NCBI Taxonomy" id="559292"/>
    <lineage>
        <taxon>Eukaryota</taxon>
        <taxon>Fungi</taxon>
        <taxon>Dikarya</taxon>
        <taxon>Ascomycota</taxon>
        <taxon>Saccharomycotina</taxon>
        <taxon>Saccharomycetes</taxon>
        <taxon>Saccharomycetales</taxon>
        <taxon>Saccharomycetaceae</taxon>
        <taxon>Saccharomyces</taxon>
    </lineage>
</organism>
<keyword id="KW-0067">ATP-binding</keyword>
<keyword id="KW-0325">Glycoprotein</keyword>
<keyword id="KW-0472">Membrane</keyword>
<keyword id="KW-0547">Nucleotide-binding</keyword>
<keyword id="KW-1185">Reference proteome</keyword>
<keyword id="KW-0677">Repeat</keyword>
<keyword id="KW-0812">Transmembrane</keyword>
<keyword id="KW-1133">Transmembrane helix</keyword>
<keyword id="KW-0813">Transport</keyword>
<feature type="chain" id="PRO_0000093443" description="ATP-dependent permease PDR10">
    <location>
        <begin position="1"/>
        <end position="1564"/>
    </location>
</feature>
<feature type="topological domain" description="Cytoplasmic" evidence="1">
    <location>
        <begin position="1"/>
        <end position="587"/>
    </location>
</feature>
<feature type="transmembrane region" description="Helical" evidence="1">
    <location>
        <begin position="588"/>
        <end position="608"/>
    </location>
</feature>
<feature type="transmembrane region" description="Helical" evidence="1">
    <location>
        <begin position="624"/>
        <end position="644"/>
    </location>
</feature>
<feature type="transmembrane region" description="Helical" evidence="1">
    <location>
        <begin position="674"/>
        <end position="694"/>
    </location>
</feature>
<feature type="transmembrane region" description="Helical" evidence="1">
    <location>
        <begin position="699"/>
        <end position="719"/>
    </location>
</feature>
<feature type="transmembrane region" description="Helical" evidence="1">
    <location>
        <begin position="732"/>
        <end position="752"/>
    </location>
</feature>
<feature type="transmembrane region" description="Helical" evidence="1">
    <location>
        <begin position="841"/>
        <end position="861"/>
    </location>
</feature>
<feature type="topological domain" description="Cytoplasmic" evidence="1">
    <location>
        <begin position="862"/>
        <end position="1304"/>
    </location>
</feature>
<feature type="transmembrane region" description="Helical" evidence="1">
    <location>
        <begin position="1305"/>
        <end position="1325"/>
    </location>
</feature>
<feature type="transmembrane region" description="Helical" evidence="1">
    <location>
        <begin position="1340"/>
        <end position="1360"/>
    </location>
</feature>
<feature type="transmembrane region" description="Helical" evidence="1">
    <location>
        <begin position="1390"/>
        <end position="1410"/>
    </location>
</feature>
<feature type="transmembrane region" description="Helical" evidence="1">
    <location>
        <begin position="1426"/>
        <end position="1446"/>
    </location>
</feature>
<feature type="transmembrane region" description="Helical" evidence="1">
    <location>
        <begin position="1459"/>
        <end position="1479"/>
    </location>
</feature>
<feature type="transmembrane region" description="Helical" evidence="1">
    <location>
        <begin position="1491"/>
        <end position="1511"/>
    </location>
</feature>
<feature type="topological domain" description="Cytoplasmic" evidence="1">
    <location>
        <begin position="1512"/>
        <end position="1564"/>
    </location>
</feature>
<feature type="domain" description="ABC transporter 1" evidence="2">
    <location>
        <begin position="174"/>
        <end position="430"/>
    </location>
</feature>
<feature type="domain" description="ABC transporter 2" evidence="2">
    <location>
        <begin position="923"/>
        <end position="1166"/>
    </location>
</feature>
<feature type="region of interest" description="Disordered" evidence="3">
    <location>
        <begin position="1"/>
        <end position="37"/>
    </location>
</feature>
<feature type="region of interest" description="Disordered" evidence="3">
    <location>
        <begin position="839"/>
        <end position="872"/>
    </location>
</feature>
<feature type="compositionally biased region" description="Polar residues" evidence="3">
    <location>
        <begin position="1"/>
        <end position="16"/>
    </location>
</feature>
<feature type="compositionally biased region" description="Basic residues" evidence="3">
    <location>
        <begin position="839"/>
        <end position="849"/>
    </location>
</feature>
<feature type="binding site" evidence="2">
    <location>
        <begin position="959"/>
        <end position="966"/>
    </location>
    <ligand>
        <name>ATP</name>
        <dbReference type="ChEBI" id="CHEBI:30616"/>
    </ligand>
</feature>
<feature type="glycosylation site" description="N-linked (GlcNAc...) asparagine" evidence="1">
    <location>
        <position position="754"/>
    </location>
</feature>
<name>PDR10_YEAST</name>
<sequence>MLQAPSSSNSGLNQGNAAPDGPPNETQPYEGLDAAAQEEIKELARTLTSQSSLLSQEKRITGTGDPNTLTAASSSSLSRSIFASDIKGVNPILLDVNDPDYDETLDPRSENFSSVRWVRNMAQICENDSDFYKPFSLGCAWKDLSASGDSADITYQGTFGNMPIKYLKMSWRCISRRLFHRTHGKSEDNDSGFQILKPMDGCINPGELLVVLGRPGAGCTTLLKSISVNTHGFKISPDTIITYNGFSNKEIKNHYRGEVVYNAESDIHIPHLTVFQTLYTVARLKTPRNRIKGVDRDTFAKHMTEVAMATYGLSHTADTKVGNDFVRGVSGGERKRVSIAEVSICGSKFQCWDNATRGLDSATALEFIKALKTQATITKSAATVAIYQCSKDAYDLFDKVCVLYDGYQIFFGPSKQAKKYFQRMGYVCPERQTTADYLTSITSPSERIKDKDMVKHGIMIPQTAYEMNQYWIQSEEYKQLQVQVNKHLDTDSSQQREQIKNAHIAKQSKRARPSSPYTVSFFLQVKYILIRDIWRIKNDPSIQLFTVLSHAAMALILGSMFYEVMLSTTTTTFYYRGAAIFFAILFNAFSSLLEIFSLYETRPITEKHKTYSLYRPSADAFASTFSDVPTKLATAVTFNIPYYFLINLKRDAGAFFFYFLINIITVFAMSHLFRCIGSVSKTLPQAMVPASVLLLAFAMYTGFAIPRVQMLGWSKWISYINPLSYLFESLMINEFHGRNFPCAQYIPSGPNYVNATGDEVTCSALGSIPGNNYVSGDDFIQTNYGYRHKNKWRSVGIGLAYIIFFLFLYLFFCEYNEGAKQNGEMLVFPHSVVKKMKKKGIVSEKKKKNQPTLSTSDAEKDVEMNNNSSATDSRFLRDSDAAIMGNDKTVAKEHYSSPSSSASQSNSFSKSDDIELSKSQAIFHWKNLCYDIPIKNGKRRILDNVDGWVKPGTLTALIGASGAGKTTLLDCLAERTTMGLITGDVFVDGRPRDQSFPRSIGYCQQQDLHLKTATVRESLRFSAYLRQADDVSIEEKDKYVEEVIEVLEMKLYADAIVGVPGEGLNVEQRKRLTIGVELAAKPKLLVFLDEPTSGLDSQTAWSTCQLMKKLASRGQAILCTIHQPSALLMQEFDRLLFLQEGGQTVYFGELGKGCKTMINYFEAHGAHKCPPDANPAEWMLEIVGAAPGTHASQDYFAIWRDSEEYREMQKELDWMERELPKRTEGSSNEEQKEFATSTLYQIKLVSYRLFHQYWRTPFYLWSKFFSTIVSELFIGFTFFKANTSLQGLQNQMLAIFMFTVVFNPILQQYLPLFVQQRELYEARERPSRTFSWKAFIVSQILVEIPWNLLAGTIAFFVYYYPVGFYRNASYANQLHERGALFWLFACAFYVYISSMGVLVISCIEIAENAANLASLFFIMSLSFCGVLATPNILPRFWIFMYRVSPLTYLIDALLSVGLANASVVCSSNELLKIVPPSGMTCSEYMEPYMQSTGTGYLLDGSSETECHFCQFSSTNDYLATVSSSYSRRWMNYGIFSAYIVFDYCAAIFLYWLVRVPKKSKKLKK</sequence>
<evidence type="ECO:0000255" key="1"/>
<evidence type="ECO:0000255" key="2">
    <source>
        <dbReference type="PROSITE-ProRule" id="PRU00434"/>
    </source>
</evidence>
<evidence type="ECO:0000256" key="3">
    <source>
        <dbReference type="SAM" id="MobiDB-lite"/>
    </source>
</evidence>
<evidence type="ECO:0000305" key="4"/>
<reference key="1">
    <citation type="journal article" date="1996" name="Yeast">
        <title>Sequence of 29 kb around the PDR10 locus on the right arm of Saccharomyces cerevisiae chromosome XV: similarity to part of chromosome I.</title>
        <authorList>
            <person name="Parle-McDermott A.G."/>
            <person name="Hand N.J."/>
            <person name="Goulding S.E."/>
            <person name="Wolfe K.H."/>
        </authorList>
    </citation>
    <scope>NUCLEOTIDE SEQUENCE [GENOMIC DNA]</scope>
</reference>
<reference key="2">
    <citation type="journal article" date="1997" name="Nature">
        <title>The nucleotide sequence of Saccharomyces cerevisiae chromosome XV.</title>
        <authorList>
            <person name="Dujon B."/>
            <person name="Albermann K."/>
            <person name="Aldea M."/>
            <person name="Alexandraki D."/>
            <person name="Ansorge W."/>
            <person name="Arino J."/>
            <person name="Benes V."/>
            <person name="Bohn C."/>
            <person name="Bolotin-Fukuhara M."/>
            <person name="Bordonne R."/>
            <person name="Boyer J."/>
            <person name="Camasses A."/>
            <person name="Casamayor A."/>
            <person name="Casas C."/>
            <person name="Cheret G."/>
            <person name="Cziepluch C."/>
            <person name="Daignan-Fornier B."/>
            <person name="Dang V.-D."/>
            <person name="de Haan M."/>
            <person name="Delius H."/>
            <person name="Durand P."/>
            <person name="Fairhead C."/>
            <person name="Feldmann H."/>
            <person name="Gaillon L."/>
            <person name="Galisson F."/>
            <person name="Gamo F.-J."/>
            <person name="Gancedo C."/>
            <person name="Goffeau A."/>
            <person name="Goulding S.E."/>
            <person name="Grivell L.A."/>
            <person name="Habbig B."/>
            <person name="Hand N.J."/>
            <person name="Hani J."/>
            <person name="Hattenhorst U."/>
            <person name="Hebling U."/>
            <person name="Hernando Y."/>
            <person name="Herrero E."/>
            <person name="Heumann K."/>
            <person name="Hiesel R."/>
            <person name="Hilger F."/>
            <person name="Hofmann B."/>
            <person name="Hollenberg C.P."/>
            <person name="Hughes B."/>
            <person name="Jauniaux J.-C."/>
            <person name="Kalogeropoulos A."/>
            <person name="Katsoulou C."/>
            <person name="Kordes E."/>
            <person name="Lafuente M.J."/>
            <person name="Landt O."/>
            <person name="Louis E.J."/>
            <person name="Maarse A.C."/>
            <person name="Madania A."/>
            <person name="Mannhaupt G."/>
            <person name="Marck C."/>
            <person name="Martin R.P."/>
            <person name="Mewes H.-W."/>
            <person name="Michaux G."/>
            <person name="Paces V."/>
            <person name="Parle-McDermott A.G."/>
            <person name="Pearson B.M."/>
            <person name="Perrin A."/>
            <person name="Pettersson B."/>
            <person name="Poch O."/>
            <person name="Pohl T.M."/>
            <person name="Poirey R."/>
            <person name="Portetelle D."/>
            <person name="Pujol A."/>
            <person name="Purnelle B."/>
            <person name="Ramezani Rad M."/>
            <person name="Rechmann S."/>
            <person name="Schwager C."/>
            <person name="Schweizer M."/>
            <person name="Sor F."/>
            <person name="Sterky F."/>
            <person name="Tarassov I.A."/>
            <person name="Teodoru C."/>
            <person name="Tettelin H."/>
            <person name="Thierry A."/>
            <person name="Tobiasch E."/>
            <person name="Tzermia M."/>
            <person name="Uhlen M."/>
            <person name="Unseld M."/>
            <person name="Valens M."/>
            <person name="Vandenbol M."/>
            <person name="Vetter I."/>
            <person name="Vlcek C."/>
            <person name="Voet M."/>
            <person name="Volckaert G."/>
            <person name="Voss H."/>
            <person name="Wambutt R."/>
            <person name="Wedler H."/>
            <person name="Wiemann S."/>
            <person name="Winsor B."/>
            <person name="Wolfe K.H."/>
            <person name="Zollner A."/>
            <person name="Zumstein E."/>
            <person name="Kleine K."/>
        </authorList>
    </citation>
    <scope>NUCLEOTIDE SEQUENCE [LARGE SCALE GENOMIC DNA]</scope>
    <source>
        <strain>ATCC 204508 / S288c</strain>
    </source>
</reference>
<reference key="3">
    <citation type="journal article" date="2014" name="G3 (Bethesda)">
        <title>The reference genome sequence of Saccharomyces cerevisiae: Then and now.</title>
        <authorList>
            <person name="Engel S.R."/>
            <person name="Dietrich F.S."/>
            <person name="Fisk D.G."/>
            <person name="Binkley G."/>
            <person name="Balakrishnan R."/>
            <person name="Costanzo M.C."/>
            <person name="Dwight S.S."/>
            <person name="Hitz B.C."/>
            <person name="Karra K."/>
            <person name="Nash R.S."/>
            <person name="Weng S."/>
            <person name="Wong E.D."/>
            <person name="Lloyd P."/>
            <person name="Skrzypek M.S."/>
            <person name="Miyasato S.R."/>
            <person name="Simison M."/>
            <person name="Cherry J.M."/>
        </authorList>
    </citation>
    <scope>GENOME REANNOTATION</scope>
    <source>
        <strain>ATCC 204508 / S288c</strain>
    </source>
</reference>
<proteinExistence type="evidence at protein level"/>
<accession>P51533</accession>
<accession>D6W325</accession>
<protein>
    <recommendedName>
        <fullName>ATP-dependent permease PDR10</fullName>
    </recommendedName>
</protein>
<dbReference type="EMBL" id="Z49821">
    <property type="protein sequence ID" value="CAA89975.1"/>
    <property type="molecule type" value="Genomic_DNA"/>
</dbReference>
<dbReference type="EMBL" id="Z75236">
    <property type="protein sequence ID" value="CAA99649.1"/>
    <property type="molecule type" value="Genomic_DNA"/>
</dbReference>
<dbReference type="EMBL" id="Z75237">
    <property type="protein sequence ID" value="CAA99651.1"/>
    <property type="molecule type" value="Genomic_DNA"/>
</dbReference>
<dbReference type="EMBL" id="BK006948">
    <property type="protein sequence ID" value="DAA11091.1"/>
    <property type="molecule type" value="Genomic_DNA"/>
</dbReference>
<dbReference type="PIR" id="S55517">
    <property type="entry name" value="S55517"/>
</dbReference>
<dbReference type="RefSeq" id="NP_014973.1">
    <property type="nucleotide sequence ID" value="NM_001183748.1"/>
</dbReference>
<dbReference type="SMR" id="P51533"/>
<dbReference type="BioGRID" id="34713">
    <property type="interactions" value="115"/>
</dbReference>
<dbReference type="FunCoup" id="P51533">
    <property type="interactions" value="231"/>
</dbReference>
<dbReference type="IntAct" id="P51533">
    <property type="interactions" value="23"/>
</dbReference>
<dbReference type="MINT" id="P51533"/>
<dbReference type="STRING" id="4932.YOR328W"/>
<dbReference type="TCDB" id="3.A.1.205.12">
    <property type="family name" value="the atp-binding cassette (abc) superfamily"/>
</dbReference>
<dbReference type="GlyCosmos" id="P51533">
    <property type="glycosylation" value="1 site, No reported glycans"/>
</dbReference>
<dbReference type="GlyGen" id="P51533">
    <property type="glycosylation" value="1 site"/>
</dbReference>
<dbReference type="iPTMnet" id="P51533"/>
<dbReference type="PaxDb" id="4932-YOR328W"/>
<dbReference type="PeptideAtlas" id="P51533"/>
<dbReference type="EnsemblFungi" id="YOR328W_mRNA">
    <property type="protein sequence ID" value="YOR328W"/>
    <property type="gene ID" value="YOR328W"/>
</dbReference>
<dbReference type="GeneID" id="854506"/>
<dbReference type="KEGG" id="sce:YOR328W"/>
<dbReference type="AGR" id="SGD:S000005855"/>
<dbReference type="SGD" id="S000005855">
    <property type="gene designation" value="PDR10"/>
</dbReference>
<dbReference type="VEuPathDB" id="FungiDB:YOR328W"/>
<dbReference type="eggNOG" id="KOG0065">
    <property type="taxonomic scope" value="Eukaryota"/>
</dbReference>
<dbReference type="GeneTree" id="ENSGT00940000176297"/>
<dbReference type="HOGENOM" id="CLU_000604_35_0_1"/>
<dbReference type="InParanoid" id="P51533"/>
<dbReference type="OMA" id="FNIFAAC"/>
<dbReference type="OrthoDB" id="245989at2759"/>
<dbReference type="BioCyc" id="YEAST:G3O-33805-MONOMER"/>
<dbReference type="BioGRID-ORCS" id="854506">
    <property type="hits" value="0 hits in 10 CRISPR screens"/>
</dbReference>
<dbReference type="PRO" id="PR:P51533"/>
<dbReference type="Proteomes" id="UP000002311">
    <property type="component" value="Chromosome XV"/>
</dbReference>
<dbReference type="RNAct" id="P51533">
    <property type="molecule type" value="protein"/>
</dbReference>
<dbReference type="GO" id="GO:0071944">
    <property type="term" value="C:cell periphery"/>
    <property type="evidence" value="ECO:0007005"/>
    <property type="project" value="SGD"/>
</dbReference>
<dbReference type="GO" id="GO:0000324">
    <property type="term" value="C:fungal-type vacuole"/>
    <property type="evidence" value="ECO:0007005"/>
    <property type="project" value="SGD"/>
</dbReference>
<dbReference type="GO" id="GO:0005886">
    <property type="term" value="C:plasma membrane"/>
    <property type="evidence" value="ECO:0000314"/>
    <property type="project" value="SGD"/>
</dbReference>
<dbReference type="GO" id="GO:0140359">
    <property type="term" value="F:ABC-type transporter activity"/>
    <property type="evidence" value="ECO:0007669"/>
    <property type="project" value="InterPro"/>
</dbReference>
<dbReference type="GO" id="GO:0005524">
    <property type="term" value="F:ATP binding"/>
    <property type="evidence" value="ECO:0007669"/>
    <property type="project" value="UniProtKB-KW"/>
</dbReference>
<dbReference type="GO" id="GO:0016887">
    <property type="term" value="F:ATP hydrolysis activity"/>
    <property type="evidence" value="ECO:0007669"/>
    <property type="project" value="InterPro"/>
</dbReference>
<dbReference type="GO" id="GO:0042626">
    <property type="term" value="F:ATPase-coupled transmembrane transporter activity"/>
    <property type="evidence" value="ECO:0000250"/>
    <property type="project" value="SGD"/>
</dbReference>
<dbReference type="GO" id="GO:1990414">
    <property type="term" value="P:replication-born double-strand break repair via sister chromatid exchange"/>
    <property type="evidence" value="ECO:0000315"/>
    <property type="project" value="SGD"/>
</dbReference>
<dbReference type="GO" id="GO:1990961">
    <property type="term" value="P:xenobiotic detoxification by transmembrane export across the plasma membrane"/>
    <property type="evidence" value="ECO:0000250"/>
    <property type="project" value="SGD"/>
</dbReference>
<dbReference type="CDD" id="cd03233">
    <property type="entry name" value="ABCG_PDR_domain1"/>
    <property type="match status" value="1"/>
</dbReference>
<dbReference type="CDD" id="cd03232">
    <property type="entry name" value="ABCG_PDR_domain2"/>
    <property type="match status" value="1"/>
</dbReference>
<dbReference type="FunFam" id="3.40.50.300:FF:000054">
    <property type="entry name" value="ABC multidrug transporter atrF"/>
    <property type="match status" value="1"/>
</dbReference>
<dbReference type="FunFam" id="3.40.50.300:FF:001262">
    <property type="entry name" value="ABC transporter CDR4"/>
    <property type="match status" value="1"/>
</dbReference>
<dbReference type="Gene3D" id="3.40.50.300">
    <property type="entry name" value="P-loop containing nucleotide triphosphate hydrolases"/>
    <property type="match status" value="2"/>
</dbReference>
<dbReference type="InterPro" id="IPR003593">
    <property type="entry name" value="AAA+_ATPase"/>
</dbReference>
<dbReference type="InterPro" id="IPR013525">
    <property type="entry name" value="ABC2_TM"/>
</dbReference>
<dbReference type="InterPro" id="IPR029481">
    <property type="entry name" value="ABC_trans_N"/>
</dbReference>
<dbReference type="InterPro" id="IPR003439">
    <property type="entry name" value="ABC_transporter-like_ATP-bd"/>
</dbReference>
<dbReference type="InterPro" id="IPR017871">
    <property type="entry name" value="ABC_transporter-like_CS"/>
</dbReference>
<dbReference type="InterPro" id="IPR034001">
    <property type="entry name" value="ABCG_PDR_1"/>
</dbReference>
<dbReference type="InterPro" id="IPR034003">
    <property type="entry name" value="ABCG_PDR_2"/>
</dbReference>
<dbReference type="InterPro" id="IPR005285">
    <property type="entry name" value="Drug-R_PDR/CDR"/>
</dbReference>
<dbReference type="InterPro" id="IPR027417">
    <property type="entry name" value="P-loop_NTPase"/>
</dbReference>
<dbReference type="InterPro" id="IPR010929">
    <property type="entry name" value="PDR_CDR_ABC"/>
</dbReference>
<dbReference type="NCBIfam" id="TIGR00956">
    <property type="entry name" value="3a01205"/>
    <property type="match status" value="1"/>
</dbReference>
<dbReference type="PANTHER" id="PTHR19241">
    <property type="entry name" value="ATP-BINDING CASSETTE TRANSPORTER"/>
    <property type="match status" value="1"/>
</dbReference>
<dbReference type="Pfam" id="PF01061">
    <property type="entry name" value="ABC2_membrane"/>
    <property type="match status" value="2"/>
</dbReference>
<dbReference type="Pfam" id="PF00005">
    <property type="entry name" value="ABC_tran"/>
    <property type="match status" value="2"/>
</dbReference>
<dbReference type="Pfam" id="PF14510">
    <property type="entry name" value="ABC_trans_N"/>
    <property type="match status" value="1"/>
</dbReference>
<dbReference type="Pfam" id="PF06422">
    <property type="entry name" value="PDR_CDR"/>
    <property type="match status" value="1"/>
</dbReference>
<dbReference type="SMART" id="SM00382">
    <property type="entry name" value="AAA"/>
    <property type="match status" value="2"/>
</dbReference>
<dbReference type="SUPFAM" id="SSF52540">
    <property type="entry name" value="P-loop containing nucleoside triphosphate hydrolases"/>
    <property type="match status" value="2"/>
</dbReference>
<dbReference type="PROSITE" id="PS00211">
    <property type="entry name" value="ABC_TRANSPORTER_1"/>
    <property type="match status" value="1"/>
</dbReference>
<dbReference type="PROSITE" id="PS50893">
    <property type="entry name" value="ABC_TRANSPORTER_2"/>
    <property type="match status" value="2"/>
</dbReference>
<comment type="interaction">
    <interactant intactId="EBI-3761544">
        <id>P51533</id>
    </interactant>
    <interactant intactId="EBI-22518">
        <id>P40030</id>
        <label>ERG28</label>
    </interactant>
    <organismsDiffer>false</organismsDiffer>
    <experiments>2</experiments>
</comment>
<comment type="interaction">
    <interactant intactId="EBI-3761544">
        <id>P51533</id>
    </interactant>
    <interactant intactId="EBI-29677">
        <id>P32804</id>
        <label>ZRT1</label>
    </interactant>
    <organismsDiffer>false</organismsDiffer>
    <experiments>2</experiments>
</comment>
<comment type="subcellular location">
    <subcellularLocation>
        <location evidence="4">Membrane</location>
        <topology evidence="4">Multi-pass membrane protein</topology>
    </subcellularLocation>
</comment>
<comment type="similarity">
    <text evidence="4">Belongs to the ABC transporter superfamily. ABCG family. PDR (TC 3.A.1.205) subfamily.</text>
</comment>